<geneLocation type="chloroplast"/>
<organism>
    <name type="scientific">Hordeum vulgare</name>
    <name type="common">Barley</name>
    <dbReference type="NCBI Taxonomy" id="4513"/>
    <lineage>
        <taxon>Eukaryota</taxon>
        <taxon>Viridiplantae</taxon>
        <taxon>Streptophyta</taxon>
        <taxon>Embryophyta</taxon>
        <taxon>Tracheophyta</taxon>
        <taxon>Spermatophyta</taxon>
        <taxon>Magnoliopsida</taxon>
        <taxon>Liliopsida</taxon>
        <taxon>Poales</taxon>
        <taxon>Poaceae</taxon>
        <taxon>BOP clade</taxon>
        <taxon>Pooideae</taxon>
        <taxon>Triticodae</taxon>
        <taxon>Triticeae</taxon>
        <taxon>Hordeinae</taxon>
        <taxon>Hordeum</taxon>
    </lineage>
</organism>
<reference key="1">
    <citation type="journal article" date="2000" name="Nucleic Acids Res.">
        <title>Transcripts of the ndhH-D operon of barley plastids: possible role of unedited site III in splicing of the ndhA intron.</title>
        <authorList>
            <person name="del Campo E.M."/>
            <person name="Sabater B."/>
            <person name="Martin M."/>
        </authorList>
    </citation>
    <scope>NUCLEOTIDE SEQUENCE [GENOMIC DNA]</scope>
    <source>
        <strain>cv. Hassan</strain>
        <tissue>Leaf</tissue>
    </source>
</reference>
<reference key="2">
    <citation type="journal article" date="2007" name="Theor. Appl. Genet.">
        <title>Complete chloroplast genome sequences of Hordeum vulgare, Sorghum bicolor and Agrostis stolonifera, and comparative analyses with other grass genomes.</title>
        <authorList>
            <person name="Saski C."/>
            <person name="Lee S.-B."/>
            <person name="Fjellheim S."/>
            <person name="Guda C."/>
            <person name="Jansen R.K."/>
            <person name="Luo H."/>
            <person name="Tomkins J."/>
            <person name="Rognli O.A."/>
            <person name="Daniell H."/>
            <person name="Clarke J.L."/>
        </authorList>
    </citation>
    <scope>NUCLEOTIDE SEQUENCE [LARGE SCALE GENOMIC DNA]</scope>
    <source>
        <strain>cv. Morex</strain>
    </source>
</reference>
<accession>O98693</accession>
<accession>A1E9P3</accession>
<keyword id="KW-0002">3D-structure</keyword>
<keyword id="KW-0150">Chloroplast</keyword>
<keyword id="KW-0472">Membrane</keyword>
<keyword id="KW-0520">NAD</keyword>
<keyword id="KW-0521">NADP</keyword>
<keyword id="KW-0934">Plastid</keyword>
<keyword id="KW-0618">Plastoquinone</keyword>
<keyword id="KW-0874">Quinone</keyword>
<keyword id="KW-0793">Thylakoid</keyword>
<keyword id="KW-1278">Translocase</keyword>
<keyword id="KW-0812">Transmembrane</keyword>
<keyword id="KW-1133">Transmembrane helix</keyword>
<keyword id="KW-0813">Transport</keyword>
<comment type="function">
    <text evidence="1">NDH shuttles electrons from NAD(P)H:plastoquinone, via FMN and iron-sulfur (Fe-S) centers, to quinones in the photosynthetic chain and possibly in a chloroplast respiratory chain. The immediate electron acceptor for the enzyme in this species is believed to be plastoquinone. Couples the redox reaction to proton translocation, and thus conserves the redox energy in a proton gradient (By similarity).</text>
</comment>
<comment type="catalytic activity">
    <reaction>
        <text>a plastoquinone + NADH + (n+1) H(+)(in) = a plastoquinol + NAD(+) + n H(+)(out)</text>
        <dbReference type="Rhea" id="RHEA:42608"/>
        <dbReference type="Rhea" id="RHEA-COMP:9561"/>
        <dbReference type="Rhea" id="RHEA-COMP:9562"/>
        <dbReference type="ChEBI" id="CHEBI:15378"/>
        <dbReference type="ChEBI" id="CHEBI:17757"/>
        <dbReference type="ChEBI" id="CHEBI:57540"/>
        <dbReference type="ChEBI" id="CHEBI:57945"/>
        <dbReference type="ChEBI" id="CHEBI:62192"/>
    </reaction>
</comment>
<comment type="catalytic activity">
    <reaction>
        <text>a plastoquinone + NADPH + (n+1) H(+)(in) = a plastoquinol + NADP(+) + n H(+)(out)</text>
        <dbReference type="Rhea" id="RHEA:42612"/>
        <dbReference type="Rhea" id="RHEA-COMP:9561"/>
        <dbReference type="Rhea" id="RHEA-COMP:9562"/>
        <dbReference type="ChEBI" id="CHEBI:15378"/>
        <dbReference type="ChEBI" id="CHEBI:17757"/>
        <dbReference type="ChEBI" id="CHEBI:57783"/>
        <dbReference type="ChEBI" id="CHEBI:58349"/>
        <dbReference type="ChEBI" id="CHEBI:62192"/>
    </reaction>
</comment>
<comment type="subunit">
    <text evidence="1">NDH is composed of at least 16 different subunits, 5 of which are encoded in the nucleus.</text>
</comment>
<comment type="subcellular location">
    <subcellularLocation>
        <location evidence="1">Plastid</location>
        <location evidence="1">Chloroplast thylakoid membrane</location>
        <topology evidence="1">Multi-pass membrane protein</topology>
    </subcellularLocation>
</comment>
<comment type="similarity">
    <text evidence="3">Belongs to the complex I subunit 6 family.</text>
</comment>
<feature type="chain" id="PRO_0000118353" description="NAD(P)H-quinone oxidoreductase subunit 6, chloroplastic">
    <location>
        <begin position="1"/>
        <end position="176"/>
    </location>
</feature>
<feature type="transmembrane region" description="Helical" evidence="2">
    <location>
        <begin position="10"/>
        <end position="30"/>
    </location>
</feature>
<feature type="transmembrane region" description="Helical" evidence="2">
    <location>
        <begin position="33"/>
        <end position="53"/>
    </location>
</feature>
<feature type="transmembrane region" description="Helical" evidence="2">
    <location>
        <begin position="60"/>
        <end position="80"/>
    </location>
</feature>
<feature type="transmembrane region" description="Helical" evidence="2">
    <location>
        <begin position="95"/>
        <end position="115"/>
    </location>
</feature>
<feature type="transmembrane region" description="Helical" evidence="2">
    <location>
        <begin position="152"/>
        <end position="172"/>
    </location>
</feature>
<feature type="sequence conflict" description="In Ref. 1; CAA09814." evidence="3" ref="1">
    <original>G</original>
    <variation>A</variation>
    <location>
        <position position="23"/>
    </location>
</feature>
<protein>
    <recommendedName>
        <fullName>NAD(P)H-quinone oxidoreductase subunit 6, chloroplastic</fullName>
        <ecNumber>7.1.1.-</ecNumber>
    </recommendedName>
    <alternativeName>
        <fullName>NAD(P)H dehydrogenase subunit 6</fullName>
    </alternativeName>
    <alternativeName>
        <fullName>NADH-plastoquinone oxidoreductase subunit 6</fullName>
    </alternativeName>
</protein>
<sequence length="176" mass="19509">MDLPGPIHEILMLFGGFILLLGGLGVVLLTNPIYSAFSLGLVLVCISLFYFLLNSYFVAVAQLLIYVGAINVLIIFAVMFVNGSEWSKDKNYWTIGDGFTSLVCITFVFSLMTTIPDTSWYGILWTTRSNQIVEQGLINNVQQIGIHLATDFYLPFELISIILLVSLIGAITMARQ</sequence>
<dbReference type="EC" id="7.1.1.-"/>
<dbReference type="EMBL" id="AJ011848">
    <property type="protein sequence ID" value="CAA09814.1"/>
    <property type="molecule type" value="Genomic_DNA"/>
</dbReference>
<dbReference type="EMBL" id="EF115541">
    <property type="protein sequence ID" value="ABK79465.1"/>
    <property type="molecule type" value="Genomic_DNA"/>
</dbReference>
<dbReference type="RefSeq" id="YP_010144478.1">
    <property type="nucleotide sequence ID" value="NC_056985.1"/>
</dbReference>
<dbReference type="RefSeq" id="YP_874705.1">
    <property type="nucleotide sequence ID" value="NC_008590.1"/>
</dbReference>
<dbReference type="PDB" id="7EU3">
    <property type="method" value="EM"/>
    <property type="resolution" value="3.70 A"/>
    <property type="chains" value="G=1-176"/>
</dbReference>
<dbReference type="PDBsum" id="7EU3"/>
<dbReference type="SMR" id="O98693"/>
<dbReference type="GeneID" id="4525170"/>
<dbReference type="GeneID" id="67140633"/>
<dbReference type="GO" id="GO:0009535">
    <property type="term" value="C:chloroplast thylakoid membrane"/>
    <property type="evidence" value="ECO:0007669"/>
    <property type="project" value="UniProtKB-SubCell"/>
</dbReference>
<dbReference type="GO" id="GO:0008137">
    <property type="term" value="F:NADH dehydrogenase (ubiquinone) activity"/>
    <property type="evidence" value="ECO:0007669"/>
    <property type="project" value="InterPro"/>
</dbReference>
<dbReference type="GO" id="GO:0048038">
    <property type="term" value="F:quinone binding"/>
    <property type="evidence" value="ECO:0007669"/>
    <property type="project" value="UniProtKB-KW"/>
</dbReference>
<dbReference type="FunFam" id="1.20.120.1200:FF:000002">
    <property type="entry name" value="NAD(P)H-quinone oxidoreductase subunit 6, chloroplastic"/>
    <property type="match status" value="1"/>
</dbReference>
<dbReference type="Gene3D" id="1.20.120.1200">
    <property type="entry name" value="NADH-ubiquinone/plastoquinone oxidoreductase chain 6, subunit NuoJ"/>
    <property type="match status" value="1"/>
</dbReference>
<dbReference type="InterPro" id="IPR050290">
    <property type="entry name" value="NAD(P)H-Q_Oxidoreduct_6"/>
</dbReference>
<dbReference type="InterPro" id="IPR001457">
    <property type="entry name" value="NADH_UbQ/plastoQ_OxRdtase_su6"/>
</dbReference>
<dbReference type="InterPro" id="IPR042106">
    <property type="entry name" value="Nuo/plastoQ_OxRdtase_6_NuoJ"/>
</dbReference>
<dbReference type="PANTHER" id="PTHR48479">
    <property type="entry name" value="NAD(P)H-QUINONE OXIDOREDUCTASE SUBUNIT 6, CHLOROPLASTIC"/>
    <property type="match status" value="1"/>
</dbReference>
<dbReference type="PANTHER" id="PTHR48479:SF1">
    <property type="entry name" value="NAD(P)H-QUINONE OXIDOREDUCTASE SUBUNIT 6, CHLOROPLASTIC"/>
    <property type="match status" value="1"/>
</dbReference>
<dbReference type="Pfam" id="PF00499">
    <property type="entry name" value="Oxidored_q3"/>
    <property type="match status" value="1"/>
</dbReference>
<gene>
    <name type="primary">ndhG</name>
</gene>
<name>NU6C_HORVU</name>
<proteinExistence type="evidence at protein level"/>
<evidence type="ECO:0000250" key="1"/>
<evidence type="ECO:0000255" key="2"/>
<evidence type="ECO:0000305" key="3"/>